<sequence>MSDQLQMTDGMHIIVEALKQNNIDTIYGVVGIPVTDMARHAQAEGIRYIGFRHEQSAGYAAAASGFLTQKPGICLTVSAPGFLNGLTALANATVNGFPMIMISGSSDRAIVDLQQGDYEELDQMNAAKPYAKAAFRVNQPQDLGIALARAIRVSVSGRPGGVYLDLPANVLAATMEKDEALTTIVKVENPSPALLPCPKSVTSAISLLAKAERPLIILGKGAAYSQADEQLREFIESAQIPFLPMSMAKGILEDTHPLSAAAARSFALANADVVMLVGARLNWLLAHGKKGWAADTQFIQLDIEPQEIDSNRPIAVPVVGDIASSMQGMLAELKQNTFTTPLVWRDILNIHKQQNAQKMHEKLSTDTQPLNYFNALSAVRDVLRENQDIYLVNEGANTLDNARNIIDMYKPRRRLDCGTWGVMGIGMGYAIGASVTSGSPVVAIEGDSAFGFSGMEIETICRYNLPVTIVIFNNGGIYRGDGVDLSGAGAPSPTDLLHHARYDKLMDAFRGVGYNVTTTDELRHALTTGIQSRKPTIINVVIDPAAGTESGHITKLNPKQVAGN</sequence>
<comment type="function">
    <text evidence="1">Involved in the catabolism of oxalate and in the adapatation to low pH via the induction of the oxalate-dependent acid tolerance response (ATR). Catalyzes the decarboxylation of oxalyl-CoA to yield carbon dioxide and formyl-CoA (By similarity).</text>
</comment>
<comment type="catalytic activity">
    <reaction>
        <text>oxalyl-CoA + H(+) = formyl-CoA + CO2</text>
        <dbReference type="Rhea" id="RHEA:19333"/>
        <dbReference type="ChEBI" id="CHEBI:15378"/>
        <dbReference type="ChEBI" id="CHEBI:16526"/>
        <dbReference type="ChEBI" id="CHEBI:57376"/>
        <dbReference type="ChEBI" id="CHEBI:57388"/>
        <dbReference type="EC" id="4.1.1.8"/>
    </reaction>
</comment>
<comment type="cofactor">
    <cofactor evidence="1">
        <name>Mg(2+)</name>
        <dbReference type="ChEBI" id="CHEBI:18420"/>
    </cofactor>
    <text evidence="1">Binds 1 Mg(2+) ion per subunit.</text>
</comment>
<comment type="cofactor">
    <cofactor evidence="1">
        <name>thiamine diphosphate</name>
        <dbReference type="ChEBI" id="CHEBI:58937"/>
    </cofactor>
    <text evidence="1">Binds 1 thiamine pyrophosphate per subunit.</text>
</comment>
<comment type="pathway">
    <text>Metabolic intermediate degradation; oxalate degradation; CO(2) and formate from oxalate: step 2/2.</text>
</comment>
<comment type="subunit">
    <text evidence="1">Homotetramer; dimer of dimers.</text>
</comment>
<comment type="similarity">
    <text evidence="2">Belongs to the TPP enzyme family.</text>
</comment>
<gene>
    <name type="primary">oxc</name>
    <name type="ordered locus">Z3637</name>
    <name type="ordered locus">ECs3253</name>
</gene>
<evidence type="ECO:0000250" key="1"/>
<evidence type="ECO:0000305" key="2"/>
<dbReference type="EC" id="4.1.1.8"/>
<dbReference type="EMBL" id="AE005174">
    <property type="protein sequence ID" value="AAG57499.1"/>
    <property type="molecule type" value="Genomic_DNA"/>
</dbReference>
<dbReference type="EMBL" id="BA000007">
    <property type="protein sequence ID" value="BAB36676.1"/>
    <property type="molecule type" value="Genomic_DNA"/>
</dbReference>
<dbReference type="PIR" id="E91035">
    <property type="entry name" value="E91035"/>
</dbReference>
<dbReference type="PIR" id="G85879">
    <property type="entry name" value="G85879"/>
</dbReference>
<dbReference type="RefSeq" id="NP_311280.1">
    <property type="nucleotide sequence ID" value="NC_002695.1"/>
</dbReference>
<dbReference type="RefSeq" id="WP_001283490.1">
    <property type="nucleotide sequence ID" value="NZ_VOAI01000001.1"/>
</dbReference>
<dbReference type="SMR" id="P0AFI1"/>
<dbReference type="STRING" id="155864.Z3637"/>
<dbReference type="GeneID" id="915646"/>
<dbReference type="GeneID" id="93774756"/>
<dbReference type="KEGG" id="ece:Z3637"/>
<dbReference type="KEGG" id="ecs:ECs_3253"/>
<dbReference type="PATRIC" id="fig|386585.9.peg.3397"/>
<dbReference type="eggNOG" id="COG0028">
    <property type="taxonomic scope" value="Bacteria"/>
</dbReference>
<dbReference type="HOGENOM" id="CLU_013748_3_3_6"/>
<dbReference type="OMA" id="QGPWIGS"/>
<dbReference type="UniPathway" id="UPA00540">
    <property type="reaction ID" value="UER00599"/>
</dbReference>
<dbReference type="Proteomes" id="UP000000558">
    <property type="component" value="Chromosome"/>
</dbReference>
<dbReference type="Proteomes" id="UP000002519">
    <property type="component" value="Chromosome"/>
</dbReference>
<dbReference type="GO" id="GO:0043531">
    <property type="term" value="F:ADP binding"/>
    <property type="evidence" value="ECO:0000250"/>
    <property type="project" value="UniProtKB"/>
</dbReference>
<dbReference type="GO" id="GO:0000287">
    <property type="term" value="F:magnesium ion binding"/>
    <property type="evidence" value="ECO:0000250"/>
    <property type="project" value="UniProtKB"/>
</dbReference>
<dbReference type="GO" id="GO:0008949">
    <property type="term" value="F:oxalyl-CoA decarboxylase activity"/>
    <property type="evidence" value="ECO:0000250"/>
    <property type="project" value="UniProtKB"/>
</dbReference>
<dbReference type="GO" id="GO:0030976">
    <property type="term" value="F:thiamine pyrophosphate binding"/>
    <property type="evidence" value="ECO:0007669"/>
    <property type="project" value="InterPro"/>
</dbReference>
<dbReference type="GO" id="GO:0001561">
    <property type="term" value="P:fatty acid alpha-oxidation"/>
    <property type="evidence" value="ECO:0007669"/>
    <property type="project" value="TreeGrafter"/>
</dbReference>
<dbReference type="GO" id="GO:0033611">
    <property type="term" value="P:oxalate catabolic process"/>
    <property type="evidence" value="ECO:0000250"/>
    <property type="project" value="UniProtKB"/>
</dbReference>
<dbReference type="CDD" id="cd02004">
    <property type="entry name" value="TPP_BZL_OCoD_HPCL"/>
    <property type="match status" value="1"/>
</dbReference>
<dbReference type="CDD" id="cd07035">
    <property type="entry name" value="TPP_PYR_POX_like"/>
    <property type="match status" value="1"/>
</dbReference>
<dbReference type="FunFam" id="3.40.50.1220:FF:000006">
    <property type="entry name" value="2-hydroxyacyl-CoA lyase 1"/>
    <property type="match status" value="1"/>
</dbReference>
<dbReference type="FunFam" id="3.40.50.970:FF:000040">
    <property type="entry name" value="Oxalyl-CoA decarboxylase"/>
    <property type="match status" value="1"/>
</dbReference>
<dbReference type="FunFam" id="3.40.50.970:FF:000042">
    <property type="entry name" value="Oxalyl-CoA decarboxylase"/>
    <property type="match status" value="1"/>
</dbReference>
<dbReference type="Gene3D" id="3.40.50.970">
    <property type="match status" value="2"/>
</dbReference>
<dbReference type="Gene3D" id="3.40.50.1220">
    <property type="entry name" value="TPP-binding domain"/>
    <property type="match status" value="1"/>
</dbReference>
<dbReference type="InterPro" id="IPR029035">
    <property type="entry name" value="DHS-like_NAD/FAD-binding_dom"/>
</dbReference>
<dbReference type="InterPro" id="IPR045025">
    <property type="entry name" value="HACL1-like"/>
</dbReference>
<dbReference type="InterPro" id="IPR017660">
    <property type="entry name" value="Oxalyl-CoA_decarboxylase"/>
</dbReference>
<dbReference type="InterPro" id="IPR029061">
    <property type="entry name" value="THDP-binding"/>
</dbReference>
<dbReference type="InterPro" id="IPR012000">
    <property type="entry name" value="Thiamin_PyroP_enz_cen_dom"/>
</dbReference>
<dbReference type="InterPro" id="IPR012001">
    <property type="entry name" value="Thiamin_PyroP_enz_TPP-bd_dom"/>
</dbReference>
<dbReference type="InterPro" id="IPR011766">
    <property type="entry name" value="TPP_enzyme_TPP-bd"/>
</dbReference>
<dbReference type="NCBIfam" id="TIGR03254">
    <property type="entry name" value="oxalate_oxc"/>
    <property type="match status" value="1"/>
</dbReference>
<dbReference type="NCBIfam" id="NF006721">
    <property type="entry name" value="PRK09259.1"/>
    <property type="match status" value="1"/>
</dbReference>
<dbReference type="PANTHER" id="PTHR43710">
    <property type="entry name" value="2-HYDROXYACYL-COA LYASE"/>
    <property type="match status" value="1"/>
</dbReference>
<dbReference type="PANTHER" id="PTHR43710:SF2">
    <property type="entry name" value="2-HYDROXYACYL-COA LYASE 1"/>
    <property type="match status" value="1"/>
</dbReference>
<dbReference type="Pfam" id="PF02775">
    <property type="entry name" value="TPP_enzyme_C"/>
    <property type="match status" value="1"/>
</dbReference>
<dbReference type="Pfam" id="PF00205">
    <property type="entry name" value="TPP_enzyme_M"/>
    <property type="match status" value="1"/>
</dbReference>
<dbReference type="Pfam" id="PF02776">
    <property type="entry name" value="TPP_enzyme_N"/>
    <property type="match status" value="1"/>
</dbReference>
<dbReference type="SUPFAM" id="SSF52467">
    <property type="entry name" value="DHS-like NAD/FAD-binding domain"/>
    <property type="match status" value="1"/>
</dbReference>
<dbReference type="SUPFAM" id="SSF52518">
    <property type="entry name" value="Thiamin diphosphate-binding fold (THDP-binding)"/>
    <property type="match status" value="2"/>
</dbReference>
<accession>P0AFI1</accession>
<accession>P78093</accession>
<accession>P78194</accession>
<accession>P78195</accession>
<organism>
    <name type="scientific">Escherichia coli O157:H7</name>
    <dbReference type="NCBI Taxonomy" id="83334"/>
    <lineage>
        <taxon>Bacteria</taxon>
        <taxon>Pseudomonadati</taxon>
        <taxon>Pseudomonadota</taxon>
        <taxon>Gammaproteobacteria</taxon>
        <taxon>Enterobacterales</taxon>
        <taxon>Enterobacteriaceae</taxon>
        <taxon>Escherichia</taxon>
    </lineage>
</organism>
<reference key="1">
    <citation type="journal article" date="2001" name="Nature">
        <title>Genome sequence of enterohaemorrhagic Escherichia coli O157:H7.</title>
        <authorList>
            <person name="Perna N.T."/>
            <person name="Plunkett G. III"/>
            <person name="Burland V."/>
            <person name="Mau B."/>
            <person name="Glasner J.D."/>
            <person name="Rose D.J."/>
            <person name="Mayhew G.F."/>
            <person name="Evans P.S."/>
            <person name="Gregor J."/>
            <person name="Kirkpatrick H.A."/>
            <person name="Posfai G."/>
            <person name="Hackett J."/>
            <person name="Klink S."/>
            <person name="Boutin A."/>
            <person name="Shao Y."/>
            <person name="Miller L."/>
            <person name="Grotbeck E.J."/>
            <person name="Davis N.W."/>
            <person name="Lim A."/>
            <person name="Dimalanta E.T."/>
            <person name="Potamousis K."/>
            <person name="Apodaca J."/>
            <person name="Anantharaman T.S."/>
            <person name="Lin J."/>
            <person name="Yen G."/>
            <person name="Schwartz D.C."/>
            <person name="Welch R.A."/>
            <person name="Blattner F.R."/>
        </authorList>
    </citation>
    <scope>NUCLEOTIDE SEQUENCE [LARGE SCALE GENOMIC DNA]</scope>
    <source>
        <strain>O157:H7 / EDL933 / ATCC 700927 / EHEC</strain>
    </source>
</reference>
<reference key="2">
    <citation type="journal article" date="2001" name="DNA Res.">
        <title>Complete genome sequence of enterohemorrhagic Escherichia coli O157:H7 and genomic comparison with a laboratory strain K-12.</title>
        <authorList>
            <person name="Hayashi T."/>
            <person name="Makino K."/>
            <person name="Ohnishi M."/>
            <person name="Kurokawa K."/>
            <person name="Ishii K."/>
            <person name="Yokoyama K."/>
            <person name="Han C.-G."/>
            <person name="Ohtsubo E."/>
            <person name="Nakayama K."/>
            <person name="Murata T."/>
            <person name="Tanaka M."/>
            <person name="Tobe T."/>
            <person name="Iida T."/>
            <person name="Takami H."/>
            <person name="Honda T."/>
            <person name="Sasakawa C."/>
            <person name="Ogasawara N."/>
            <person name="Yasunaga T."/>
            <person name="Kuhara S."/>
            <person name="Shiba T."/>
            <person name="Hattori M."/>
            <person name="Shinagawa H."/>
        </authorList>
    </citation>
    <scope>NUCLEOTIDE SEQUENCE [LARGE SCALE GENOMIC DNA]</scope>
    <source>
        <strain>O157:H7 / Sakai / RIMD 0509952 / EHEC</strain>
    </source>
</reference>
<protein>
    <recommendedName>
        <fullName>Oxalyl-CoA decarboxylase</fullName>
        <ecNumber>4.1.1.8</ecNumber>
    </recommendedName>
</protein>
<proteinExistence type="inferred from homology"/>
<name>OXC_ECO57</name>
<feature type="chain" id="PRO_0000090825" description="Oxalyl-CoA decarboxylase">
    <location>
        <begin position="1"/>
        <end position="564"/>
    </location>
</feature>
<feature type="binding site" evidence="1">
    <location>
        <position position="32"/>
    </location>
    <ligand>
        <name>substrate</name>
    </ligand>
</feature>
<feature type="binding site" evidence="1">
    <location>
        <position position="118"/>
    </location>
    <ligand>
        <name>substrate</name>
    </ligand>
</feature>
<feature type="binding site" evidence="1">
    <location>
        <position position="158"/>
    </location>
    <ligand>
        <name>ADP</name>
        <dbReference type="ChEBI" id="CHEBI:456216"/>
    </ligand>
</feature>
<feature type="binding site" evidence="1">
    <location>
        <position position="220"/>
    </location>
    <ligand>
        <name>ADP</name>
        <dbReference type="ChEBI" id="CHEBI:456216"/>
    </ligand>
</feature>
<feature type="binding site" evidence="1">
    <location>
        <begin position="261"/>
        <end position="265"/>
    </location>
    <ligand>
        <name>substrate</name>
    </ligand>
</feature>
<feature type="binding site" evidence="1">
    <location>
        <position position="280"/>
    </location>
    <ligand>
        <name>ADP</name>
        <dbReference type="ChEBI" id="CHEBI:456216"/>
    </ligand>
</feature>
<feature type="binding site" evidence="1">
    <location>
        <position position="302"/>
    </location>
    <ligand>
        <name>ADP</name>
        <dbReference type="ChEBI" id="CHEBI:456216"/>
    </ligand>
</feature>
<feature type="binding site" evidence="1">
    <location>
        <position position="322"/>
    </location>
    <ligand>
        <name>ADP</name>
        <dbReference type="ChEBI" id="CHEBI:456216"/>
    </ligand>
</feature>
<feature type="binding site" evidence="1">
    <location>
        <position position="355"/>
    </location>
    <ligand>
        <name>substrate</name>
    </ligand>
</feature>
<feature type="binding site" evidence="1">
    <location>
        <position position="372"/>
    </location>
    <ligand>
        <name>thiamine diphosphate</name>
        <dbReference type="ChEBI" id="CHEBI:58937"/>
    </ligand>
</feature>
<feature type="binding site" evidence="1">
    <location>
        <begin position="396"/>
        <end position="398"/>
    </location>
    <ligand>
        <name>thiamine diphosphate</name>
        <dbReference type="ChEBI" id="CHEBI:58937"/>
    </ligand>
</feature>
<feature type="binding site" evidence="1">
    <location>
        <begin position="403"/>
        <end position="404"/>
    </location>
    <ligand>
        <name>substrate</name>
    </ligand>
</feature>
<feature type="binding site" evidence="1">
    <location>
        <begin position="421"/>
        <end position="423"/>
    </location>
    <ligand>
        <name>thiamine diphosphate</name>
        <dbReference type="ChEBI" id="CHEBI:58937"/>
    </ligand>
</feature>
<feature type="binding site" evidence="1">
    <location>
        <position position="447"/>
    </location>
    <ligand>
        <name>Mg(2+)</name>
        <dbReference type="ChEBI" id="CHEBI:18420"/>
    </ligand>
</feature>
<feature type="binding site" evidence="1">
    <location>
        <begin position="448"/>
        <end position="449"/>
    </location>
    <ligand>
        <name>thiamine diphosphate</name>
        <dbReference type="ChEBI" id="CHEBI:58937"/>
    </ligand>
</feature>
<feature type="binding site" evidence="1">
    <location>
        <position position="474"/>
    </location>
    <ligand>
        <name>Mg(2+)</name>
        <dbReference type="ChEBI" id="CHEBI:18420"/>
    </ligand>
</feature>
<feature type="binding site" evidence="1">
    <location>
        <position position="476"/>
    </location>
    <ligand>
        <name>Mg(2+)</name>
        <dbReference type="ChEBI" id="CHEBI:18420"/>
    </ligand>
</feature>
<feature type="binding site" evidence="1">
    <location>
        <position position="478"/>
    </location>
    <ligand>
        <name>thiamine diphosphate</name>
        <dbReference type="ChEBI" id="CHEBI:58937"/>
    </ligand>
</feature>
<feature type="binding site" evidence="1">
    <location>
        <begin position="550"/>
        <end position="552"/>
    </location>
    <ligand>
        <name>substrate</name>
    </ligand>
</feature>
<keyword id="KW-0210">Decarboxylase</keyword>
<keyword id="KW-0456">Lyase</keyword>
<keyword id="KW-0460">Magnesium</keyword>
<keyword id="KW-0479">Metal-binding</keyword>
<keyword id="KW-0547">Nucleotide-binding</keyword>
<keyword id="KW-1185">Reference proteome</keyword>
<keyword id="KW-0786">Thiamine pyrophosphate</keyword>